<dbReference type="EC" id="3.1.4.2"/>
<dbReference type="EMBL" id="AB037855">
    <property type="protein sequence ID" value="BAA92672.1"/>
    <property type="status" value="ALT_INIT"/>
    <property type="molecule type" value="mRNA"/>
</dbReference>
<dbReference type="EMBL" id="AL109935">
    <property type="status" value="NOT_ANNOTATED_CDS"/>
    <property type="molecule type" value="Genomic_DNA"/>
</dbReference>
<dbReference type="EMBL" id="CH471133">
    <property type="protein sequence ID" value="EAX10414.1"/>
    <property type="molecule type" value="Genomic_DNA"/>
</dbReference>
<dbReference type="EMBL" id="CH471133">
    <property type="protein sequence ID" value="EAX10415.1"/>
    <property type="molecule type" value="Genomic_DNA"/>
</dbReference>
<dbReference type="EMBL" id="BC027588">
    <property type="protein sequence ID" value="AAH27588.1"/>
    <property type="molecule type" value="mRNA"/>
</dbReference>
<dbReference type="EMBL" id="AK001947">
    <property type="protein sequence ID" value="BAA91994.1"/>
    <property type="status" value="ALT_INIT"/>
    <property type="molecule type" value="mRNA"/>
</dbReference>
<dbReference type="CCDS" id="CCDS13090.1"/>
<dbReference type="RefSeq" id="NP_062539.1">
    <property type="nucleotide sequence ID" value="NM_019593.5"/>
</dbReference>
<dbReference type="RefSeq" id="XP_005260815.1">
    <property type="nucleotide sequence ID" value="XM_005260758.4"/>
</dbReference>
<dbReference type="RefSeq" id="XP_006723659.1">
    <property type="nucleotide sequence ID" value="XM_006723596.3"/>
</dbReference>
<dbReference type="PDB" id="2Z0B">
    <property type="method" value="X-ray"/>
    <property type="resolution" value="2.00 A"/>
    <property type="chains" value="A/B/C/D/E/F=3-120"/>
</dbReference>
<dbReference type="PDBsum" id="2Z0B"/>
<dbReference type="SMR" id="Q9NPB8"/>
<dbReference type="BioGRID" id="121125">
    <property type="interactions" value="7"/>
</dbReference>
<dbReference type="FunCoup" id="Q9NPB8">
    <property type="interactions" value="928"/>
</dbReference>
<dbReference type="IntAct" id="Q9NPB8">
    <property type="interactions" value="4"/>
</dbReference>
<dbReference type="MINT" id="Q9NPB8"/>
<dbReference type="STRING" id="9606.ENSP00000368305"/>
<dbReference type="BindingDB" id="Q9NPB8"/>
<dbReference type="CAZy" id="CBM20">
    <property type="family name" value="Carbohydrate-Binding Module Family 20"/>
</dbReference>
<dbReference type="iPTMnet" id="Q9NPB8"/>
<dbReference type="PhosphoSitePlus" id="Q9NPB8"/>
<dbReference type="BioMuta" id="GPCPD1"/>
<dbReference type="DMDM" id="23821811"/>
<dbReference type="jPOST" id="Q9NPB8"/>
<dbReference type="MassIVE" id="Q9NPB8"/>
<dbReference type="PaxDb" id="9606-ENSP00000368305"/>
<dbReference type="PeptideAtlas" id="Q9NPB8"/>
<dbReference type="ProteomicsDB" id="81961"/>
<dbReference type="Pumba" id="Q9NPB8"/>
<dbReference type="Antibodypedia" id="23917">
    <property type="antibodies" value="22 antibodies from 9 providers"/>
</dbReference>
<dbReference type="DNASU" id="56261"/>
<dbReference type="Ensembl" id="ENST00000379019.7">
    <property type="protein sequence ID" value="ENSP00000368305.4"/>
    <property type="gene ID" value="ENSG00000125772.15"/>
</dbReference>
<dbReference type="Ensembl" id="ENST00000718343.1">
    <property type="protein sequence ID" value="ENSP00000520780.1"/>
    <property type="gene ID" value="ENSG00000125772.15"/>
</dbReference>
<dbReference type="GeneID" id="56261"/>
<dbReference type="KEGG" id="hsa:56261"/>
<dbReference type="MANE-Select" id="ENST00000379019.7">
    <property type="protein sequence ID" value="ENSP00000368305.4"/>
    <property type="RefSeq nucleotide sequence ID" value="NM_019593.5"/>
    <property type="RefSeq protein sequence ID" value="NP_062539.1"/>
</dbReference>
<dbReference type="UCSC" id="uc002wme.5">
    <property type="organism name" value="human"/>
</dbReference>
<dbReference type="AGR" id="HGNC:26957"/>
<dbReference type="CTD" id="56261"/>
<dbReference type="DisGeNET" id="56261"/>
<dbReference type="GeneCards" id="GPCPD1"/>
<dbReference type="HGNC" id="HGNC:26957">
    <property type="gene designation" value="GPCPD1"/>
</dbReference>
<dbReference type="HPA" id="ENSG00000125772">
    <property type="expression patterns" value="Tissue enhanced (bone)"/>
</dbReference>
<dbReference type="MIM" id="614124">
    <property type="type" value="gene"/>
</dbReference>
<dbReference type="neXtProt" id="NX_Q9NPB8"/>
<dbReference type="OpenTargets" id="ENSG00000125772"/>
<dbReference type="PharmGKB" id="PA165392351"/>
<dbReference type="VEuPathDB" id="HostDB:ENSG00000125772"/>
<dbReference type="eggNOG" id="KOG2421">
    <property type="taxonomic scope" value="Eukaryota"/>
</dbReference>
<dbReference type="GeneTree" id="ENSGT00440000033970"/>
<dbReference type="HOGENOM" id="CLU_013007_2_0_1"/>
<dbReference type="InParanoid" id="Q9NPB8"/>
<dbReference type="OMA" id="LKVYHTA"/>
<dbReference type="OrthoDB" id="1058301at2759"/>
<dbReference type="PAN-GO" id="Q9NPB8">
    <property type="GO annotations" value="2 GO annotations based on evolutionary models"/>
</dbReference>
<dbReference type="PhylomeDB" id="Q9NPB8"/>
<dbReference type="TreeFam" id="TF314722"/>
<dbReference type="BRENDA" id="3.1.4.46">
    <property type="organism ID" value="2681"/>
</dbReference>
<dbReference type="PathwayCommons" id="Q9NPB8"/>
<dbReference type="Reactome" id="R-HSA-1483115">
    <property type="pathway name" value="Hydrolysis of LPC"/>
</dbReference>
<dbReference type="Reactome" id="R-HSA-1483152">
    <property type="pathway name" value="Hydrolysis of LPE"/>
</dbReference>
<dbReference type="SignaLink" id="Q9NPB8"/>
<dbReference type="BioGRID-ORCS" id="56261">
    <property type="hits" value="13 hits in 1146 CRISPR screens"/>
</dbReference>
<dbReference type="ChiTaRS" id="GPCPD1">
    <property type="organism name" value="human"/>
</dbReference>
<dbReference type="EvolutionaryTrace" id="Q9NPB8"/>
<dbReference type="GenomeRNAi" id="56261"/>
<dbReference type="Pharos" id="Q9NPB8">
    <property type="development level" value="Tdark"/>
</dbReference>
<dbReference type="PRO" id="PR:Q9NPB8"/>
<dbReference type="Proteomes" id="UP000005640">
    <property type="component" value="Chromosome 20"/>
</dbReference>
<dbReference type="RNAct" id="Q9NPB8">
    <property type="molecule type" value="protein"/>
</dbReference>
<dbReference type="Bgee" id="ENSG00000125772">
    <property type="expression patterns" value="Expressed in palpebral conjunctiva and 189 other cell types or tissues"/>
</dbReference>
<dbReference type="ExpressionAtlas" id="Q9NPB8">
    <property type="expression patterns" value="baseline and differential"/>
</dbReference>
<dbReference type="GO" id="GO:0005829">
    <property type="term" value="C:cytosol"/>
    <property type="evidence" value="ECO:0007669"/>
    <property type="project" value="UniProtKB-SubCell"/>
</dbReference>
<dbReference type="GO" id="GO:0047389">
    <property type="term" value="F:glycerophosphocholine phosphodiesterase activity"/>
    <property type="evidence" value="ECO:0000318"/>
    <property type="project" value="GO_Central"/>
</dbReference>
<dbReference type="GO" id="GO:2001070">
    <property type="term" value="F:starch binding"/>
    <property type="evidence" value="ECO:0007669"/>
    <property type="project" value="InterPro"/>
</dbReference>
<dbReference type="GO" id="GO:0046475">
    <property type="term" value="P:glycerophospholipid catabolic process"/>
    <property type="evidence" value="ECO:0000318"/>
    <property type="project" value="GO_Central"/>
</dbReference>
<dbReference type="GO" id="GO:0007519">
    <property type="term" value="P:skeletal muscle tissue development"/>
    <property type="evidence" value="ECO:0007669"/>
    <property type="project" value="Ensembl"/>
</dbReference>
<dbReference type="CDD" id="cd05814">
    <property type="entry name" value="CBM20_Prei4"/>
    <property type="match status" value="1"/>
</dbReference>
<dbReference type="CDD" id="cd08607">
    <property type="entry name" value="GDPD_GDE5"/>
    <property type="match status" value="1"/>
</dbReference>
<dbReference type="FunFam" id="3.20.20.190:FF:000015">
    <property type="entry name" value="Glycerophosphocholine phosphodiesterase GPCPD1"/>
    <property type="match status" value="1"/>
</dbReference>
<dbReference type="FunFam" id="2.60.40.10:FF:000752">
    <property type="entry name" value="Putative glycerophosphocholine phosphodiesterase GPCPD1"/>
    <property type="match status" value="1"/>
</dbReference>
<dbReference type="Gene3D" id="2.60.40.10">
    <property type="entry name" value="Immunoglobulins"/>
    <property type="match status" value="1"/>
</dbReference>
<dbReference type="Gene3D" id="3.20.20.190">
    <property type="entry name" value="Phosphatidylinositol (PI) phosphodiesterase"/>
    <property type="match status" value="1"/>
</dbReference>
<dbReference type="InterPro" id="IPR013784">
    <property type="entry name" value="Carb-bd-like_fold"/>
</dbReference>
<dbReference type="InterPro" id="IPR002044">
    <property type="entry name" value="CBM20"/>
</dbReference>
<dbReference type="InterPro" id="IPR034839">
    <property type="entry name" value="CBM20_GPCPD1"/>
</dbReference>
<dbReference type="InterPro" id="IPR051578">
    <property type="entry name" value="GDPD"/>
</dbReference>
<dbReference type="InterPro" id="IPR030395">
    <property type="entry name" value="GP_PDE_dom"/>
</dbReference>
<dbReference type="InterPro" id="IPR013783">
    <property type="entry name" value="Ig-like_fold"/>
</dbReference>
<dbReference type="InterPro" id="IPR017946">
    <property type="entry name" value="PLC-like_Pdiesterase_TIM-brl"/>
</dbReference>
<dbReference type="PANTHER" id="PTHR22958:SF1">
    <property type="entry name" value="GLYCEROPHOSPHOCHOLINE PHOSPHODIESTERASE GPCPD1"/>
    <property type="match status" value="1"/>
</dbReference>
<dbReference type="PANTHER" id="PTHR22958">
    <property type="entry name" value="GLYCEROPHOSPHORYL DIESTER PHOSPHODIESTERASE"/>
    <property type="match status" value="1"/>
</dbReference>
<dbReference type="Pfam" id="PF25329">
    <property type="entry name" value="C2_GDE1"/>
    <property type="match status" value="1"/>
</dbReference>
<dbReference type="Pfam" id="PF00686">
    <property type="entry name" value="CBM_20"/>
    <property type="match status" value="1"/>
</dbReference>
<dbReference type="Pfam" id="PF03009">
    <property type="entry name" value="GDPD"/>
    <property type="match status" value="1"/>
</dbReference>
<dbReference type="SMART" id="SM01065">
    <property type="entry name" value="CBM_2"/>
    <property type="match status" value="1"/>
</dbReference>
<dbReference type="SUPFAM" id="SSF51695">
    <property type="entry name" value="PLC-like phosphodiesterases"/>
    <property type="match status" value="1"/>
</dbReference>
<dbReference type="SUPFAM" id="SSF49452">
    <property type="entry name" value="Starch-binding domain-like"/>
    <property type="match status" value="1"/>
</dbReference>
<dbReference type="PROSITE" id="PS51166">
    <property type="entry name" value="CBM20"/>
    <property type="match status" value="1"/>
</dbReference>
<dbReference type="PROSITE" id="PS51704">
    <property type="entry name" value="GP_PDE"/>
    <property type="match status" value="1"/>
</dbReference>
<protein>
    <recommendedName>
        <fullName>Glycerophosphocholine phosphodiesterase GPCPD1</fullName>
        <ecNumber>3.1.4.2</ecNumber>
    </recommendedName>
    <alternativeName>
        <fullName>Glycerophosphodiester phosphodiesterase 5</fullName>
    </alternativeName>
</protein>
<reference key="1">
    <citation type="journal article" date="2000" name="DNA Res.">
        <title>Prediction of the coding sequences of unidentified human genes. XVI. The complete sequences of 150 new cDNA clones from brain which code for large proteins in vitro.</title>
        <authorList>
            <person name="Nagase T."/>
            <person name="Kikuno R."/>
            <person name="Ishikawa K."/>
            <person name="Hirosawa M."/>
            <person name="Ohara O."/>
        </authorList>
    </citation>
    <scope>NUCLEOTIDE SEQUENCE [LARGE SCALE MRNA]</scope>
    <source>
        <tissue>Brain</tissue>
    </source>
</reference>
<reference key="2">
    <citation type="journal article" date="2001" name="Nature">
        <title>The DNA sequence and comparative analysis of human chromosome 20.</title>
        <authorList>
            <person name="Deloukas P."/>
            <person name="Matthews L.H."/>
            <person name="Ashurst J.L."/>
            <person name="Burton J."/>
            <person name="Gilbert J.G.R."/>
            <person name="Jones M."/>
            <person name="Stavrides G."/>
            <person name="Almeida J.P."/>
            <person name="Babbage A.K."/>
            <person name="Bagguley C.L."/>
            <person name="Bailey J."/>
            <person name="Barlow K.F."/>
            <person name="Bates K.N."/>
            <person name="Beard L.M."/>
            <person name="Beare D.M."/>
            <person name="Beasley O.P."/>
            <person name="Bird C.P."/>
            <person name="Blakey S.E."/>
            <person name="Bridgeman A.M."/>
            <person name="Brown A.J."/>
            <person name="Buck D."/>
            <person name="Burrill W.D."/>
            <person name="Butler A.P."/>
            <person name="Carder C."/>
            <person name="Carter N.P."/>
            <person name="Chapman J.C."/>
            <person name="Clamp M."/>
            <person name="Clark G."/>
            <person name="Clark L.N."/>
            <person name="Clark S.Y."/>
            <person name="Clee C.M."/>
            <person name="Clegg S."/>
            <person name="Cobley V.E."/>
            <person name="Collier R.E."/>
            <person name="Connor R.E."/>
            <person name="Corby N.R."/>
            <person name="Coulson A."/>
            <person name="Coville G.J."/>
            <person name="Deadman R."/>
            <person name="Dhami P.D."/>
            <person name="Dunn M."/>
            <person name="Ellington A.G."/>
            <person name="Frankland J.A."/>
            <person name="Fraser A."/>
            <person name="French L."/>
            <person name="Garner P."/>
            <person name="Grafham D.V."/>
            <person name="Griffiths C."/>
            <person name="Griffiths M.N.D."/>
            <person name="Gwilliam R."/>
            <person name="Hall R.E."/>
            <person name="Hammond S."/>
            <person name="Harley J.L."/>
            <person name="Heath P.D."/>
            <person name="Ho S."/>
            <person name="Holden J.L."/>
            <person name="Howden P.J."/>
            <person name="Huckle E."/>
            <person name="Hunt A.R."/>
            <person name="Hunt S.E."/>
            <person name="Jekosch K."/>
            <person name="Johnson C.M."/>
            <person name="Johnson D."/>
            <person name="Kay M.P."/>
            <person name="Kimberley A.M."/>
            <person name="King A."/>
            <person name="Knights A."/>
            <person name="Laird G.K."/>
            <person name="Lawlor S."/>
            <person name="Lehvaeslaiho M.H."/>
            <person name="Leversha M.A."/>
            <person name="Lloyd C."/>
            <person name="Lloyd D.M."/>
            <person name="Lovell J.D."/>
            <person name="Marsh V.L."/>
            <person name="Martin S.L."/>
            <person name="McConnachie L.J."/>
            <person name="McLay K."/>
            <person name="McMurray A.A."/>
            <person name="Milne S.A."/>
            <person name="Mistry D."/>
            <person name="Moore M.J.F."/>
            <person name="Mullikin J.C."/>
            <person name="Nickerson T."/>
            <person name="Oliver K."/>
            <person name="Parker A."/>
            <person name="Patel R."/>
            <person name="Pearce T.A.V."/>
            <person name="Peck A.I."/>
            <person name="Phillimore B.J.C.T."/>
            <person name="Prathalingam S.R."/>
            <person name="Plumb R.W."/>
            <person name="Ramsay H."/>
            <person name="Rice C.M."/>
            <person name="Ross M.T."/>
            <person name="Scott C.E."/>
            <person name="Sehra H.K."/>
            <person name="Shownkeen R."/>
            <person name="Sims S."/>
            <person name="Skuce C.D."/>
            <person name="Smith M.L."/>
            <person name="Soderlund C."/>
            <person name="Steward C.A."/>
            <person name="Sulston J.E."/>
            <person name="Swann R.M."/>
            <person name="Sycamore N."/>
            <person name="Taylor R."/>
            <person name="Tee L."/>
            <person name="Thomas D.W."/>
            <person name="Thorpe A."/>
            <person name="Tracey A."/>
            <person name="Tromans A.C."/>
            <person name="Vaudin M."/>
            <person name="Wall M."/>
            <person name="Wallis J.M."/>
            <person name="Whitehead S.L."/>
            <person name="Whittaker P."/>
            <person name="Willey D.L."/>
            <person name="Williams L."/>
            <person name="Williams S.A."/>
            <person name="Wilming L."/>
            <person name="Wray P.W."/>
            <person name="Hubbard T."/>
            <person name="Durbin R.M."/>
            <person name="Bentley D.R."/>
            <person name="Beck S."/>
            <person name="Rogers J."/>
        </authorList>
    </citation>
    <scope>NUCLEOTIDE SEQUENCE [LARGE SCALE GENOMIC DNA]</scope>
</reference>
<reference key="3">
    <citation type="submission" date="2005-09" db="EMBL/GenBank/DDBJ databases">
        <authorList>
            <person name="Mural R.J."/>
            <person name="Istrail S."/>
            <person name="Sutton G.G."/>
            <person name="Florea L."/>
            <person name="Halpern A.L."/>
            <person name="Mobarry C.M."/>
            <person name="Lippert R."/>
            <person name="Walenz B."/>
            <person name="Shatkay H."/>
            <person name="Dew I."/>
            <person name="Miller J.R."/>
            <person name="Flanigan M.J."/>
            <person name="Edwards N.J."/>
            <person name="Bolanos R."/>
            <person name="Fasulo D."/>
            <person name="Halldorsson B.V."/>
            <person name="Hannenhalli S."/>
            <person name="Turner R."/>
            <person name="Yooseph S."/>
            <person name="Lu F."/>
            <person name="Nusskern D.R."/>
            <person name="Shue B.C."/>
            <person name="Zheng X.H."/>
            <person name="Zhong F."/>
            <person name="Delcher A.L."/>
            <person name="Huson D.H."/>
            <person name="Kravitz S.A."/>
            <person name="Mouchard L."/>
            <person name="Reinert K."/>
            <person name="Remington K.A."/>
            <person name="Clark A.G."/>
            <person name="Waterman M.S."/>
            <person name="Eichler E.E."/>
            <person name="Adams M.D."/>
            <person name="Hunkapiller M.W."/>
            <person name="Myers E.W."/>
            <person name="Venter J.C."/>
        </authorList>
    </citation>
    <scope>NUCLEOTIDE SEQUENCE [LARGE SCALE GENOMIC DNA]</scope>
</reference>
<reference key="4">
    <citation type="journal article" date="2004" name="Genome Res.">
        <title>The status, quality, and expansion of the NIH full-length cDNA project: the Mammalian Gene Collection (MGC).</title>
        <authorList>
            <consortium name="The MGC Project Team"/>
        </authorList>
    </citation>
    <scope>NUCLEOTIDE SEQUENCE [LARGE SCALE MRNA]</scope>
    <source>
        <tissue>Testis</tissue>
    </source>
</reference>
<reference key="5">
    <citation type="journal article" date="2004" name="Nat. Genet.">
        <title>Complete sequencing and characterization of 21,243 full-length human cDNAs.</title>
        <authorList>
            <person name="Ota T."/>
            <person name="Suzuki Y."/>
            <person name="Nishikawa T."/>
            <person name="Otsuki T."/>
            <person name="Sugiyama T."/>
            <person name="Irie R."/>
            <person name="Wakamatsu A."/>
            <person name="Hayashi K."/>
            <person name="Sato H."/>
            <person name="Nagai K."/>
            <person name="Kimura K."/>
            <person name="Makita H."/>
            <person name="Sekine M."/>
            <person name="Obayashi M."/>
            <person name="Nishi T."/>
            <person name="Shibahara T."/>
            <person name="Tanaka T."/>
            <person name="Ishii S."/>
            <person name="Yamamoto J."/>
            <person name="Saito K."/>
            <person name="Kawai Y."/>
            <person name="Isono Y."/>
            <person name="Nakamura Y."/>
            <person name="Nagahari K."/>
            <person name="Murakami K."/>
            <person name="Yasuda T."/>
            <person name="Iwayanagi T."/>
            <person name="Wagatsuma M."/>
            <person name="Shiratori A."/>
            <person name="Sudo H."/>
            <person name="Hosoiri T."/>
            <person name="Kaku Y."/>
            <person name="Kodaira H."/>
            <person name="Kondo H."/>
            <person name="Sugawara M."/>
            <person name="Takahashi M."/>
            <person name="Kanda K."/>
            <person name="Yokoi T."/>
            <person name="Furuya T."/>
            <person name="Kikkawa E."/>
            <person name="Omura Y."/>
            <person name="Abe K."/>
            <person name="Kamihara K."/>
            <person name="Katsuta N."/>
            <person name="Sato K."/>
            <person name="Tanikawa M."/>
            <person name="Yamazaki M."/>
            <person name="Ninomiya K."/>
            <person name="Ishibashi T."/>
            <person name="Yamashita H."/>
            <person name="Murakawa K."/>
            <person name="Fujimori K."/>
            <person name="Tanai H."/>
            <person name="Kimata M."/>
            <person name="Watanabe M."/>
            <person name="Hiraoka S."/>
            <person name="Chiba Y."/>
            <person name="Ishida S."/>
            <person name="Ono Y."/>
            <person name="Takiguchi S."/>
            <person name="Watanabe S."/>
            <person name="Yosida M."/>
            <person name="Hotuta T."/>
            <person name="Kusano J."/>
            <person name="Kanehori K."/>
            <person name="Takahashi-Fujii A."/>
            <person name="Hara H."/>
            <person name="Tanase T.-O."/>
            <person name="Nomura Y."/>
            <person name="Togiya S."/>
            <person name="Komai F."/>
            <person name="Hara R."/>
            <person name="Takeuchi K."/>
            <person name="Arita M."/>
            <person name="Imose N."/>
            <person name="Musashino K."/>
            <person name="Yuuki H."/>
            <person name="Oshima A."/>
            <person name="Sasaki N."/>
            <person name="Aotsuka S."/>
            <person name="Yoshikawa Y."/>
            <person name="Matsunawa H."/>
            <person name="Ichihara T."/>
            <person name="Shiohata N."/>
            <person name="Sano S."/>
            <person name="Moriya S."/>
            <person name="Momiyama H."/>
            <person name="Satoh N."/>
            <person name="Takami S."/>
            <person name="Terashima Y."/>
            <person name="Suzuki O."/>
            <person name="Nakagawa S."/>
            <person name="Senoh A."/>
            <person name="Mizoguchi H."/>
            <person name="Goto Y."/>
            <person name="Shimizu F."/>
            <person name="Wakebe H."/>
            <person name="Hishigaki H."/>
            <person name="Watanabe T."/>
            <person name="Sugiyama A."/>
            <person name="Takemoto M."/>
            <person name="Kawakami B."/>
            <person name="Yamazaki M."/>
            <person name="Watanabe K."/>
            <person name="Kumagai A."/>
            <person name="Itakura S."/>
            <person name="Fukuzumi Y."/>
            <person name="Fujimori Y."/>
            <person name="Komiyama M."/>
            <person name="Tashiro H."/>
            <person name="Tanigami A."/>
            <person name="Fujiwara T."/>
            <person name="Ono T."/>
            <person name="Yamada K."/>
            <person name="Fujii Y."/>
            <person name="Ozaki K."/>
            <person name="Hirao M."/>
            <person name="Ohmori Y."/>
            <person name="Kawabata A."/>
            <person name="Hikiji T."/>
            <person name="Kobatake N."/>
            <person name="Inagaki H."/>
            <person name="Ikema Y."/>
            <person name="Okamoto S."/>
            <person name="Okitani R."/>
            <person name="Kawakami T."/>
            <person name="Noguchi S."/>
            <person name="Itoh T."/>
            <person name="Shigeta K."/>
            <person name="Senba T."/>
            <person name="Matsumura K."/>
            <person name="Nakajima Y."/>
            <person name="Mizuno T."/>
            <person name="Morinaga M."/>
            <person name="Sasaki M."/>
            <person name="Togashi T."/>
            <person name="Oyama M."/>
            <person name="Hata H."/>
            <person name="Watanabe M."/>
            <person name="Komatsu T."/>
            <person name="Mizushima-Sugano J."/>
            <person name="Satoh T."/>
            <person name="Shirai Y."/>
            <person name="Takahashi Y."/>
            <person name="Nakagawa K."/>
            <person name="Okumura K."/>
            <person name="Nagase T."/>
            <person name="Nomura N."/>
            <person name="Kikuchi H."/>
            <person name="Masuho Y."/>
            <person name="Yamashita R."/>
            <person name="Nakai K."/>
            <person name="Yada T."/>
            <person name="Nakamura Y."/>
            <person name="Ohara O."/>
            <person name="Isogai T."/>
            <person name="Sugano S."/>
        </authorList>
    </citation>
    <scope>NUCLEOTIDE SEQUENCE [LARGE SCALE MRNA] OF 413-672</scope>
    <source>
        <tissue>Placenta</tissue>
    </source>
</reference>
<reference key="6">
    <citation type="journal article" date="2012" name="Proc. Natl. Acad. Sci. U.S.A.">
        <title>N-terminal acetylome analyses and functional insights of the N-terminal acetyltransferase NatB.</title>
        <authorList>
            <person name="Van Damme P."/>
            <person name="Lasa M."/>
            <person name="Polevoda B."/>
            <person name="Gazquez C."/>
            <person name="Elosegui-Artola A."/>
            <person name="Kim D.S."/>
            <person name="De Juan-Pardo E."/>
            <person name="Demeyer K."/>
            <person name="Hole K."/>
            <person name="Larrea E."/>
            <person name="Timmerman E."/>
            <person name="Prieto J."/>
            <person name="Arnesen T."/>
            <person name="Sherman F."/>
            <person name="Gevaert K."/>
            <person name="Aldabe R."/>
        </authorList>
    </citation>
    <scope>IDENTIFICATION BY MASS SPECTROMETRY [LARGE SCALE ANALYSIS]</scope>
</reference>
<reference key="7">
    <citation type="journal article" date="2013" name="J. Proteome Res.">
        <title>Toward a comprehensive characterization of a human cancer cell phosphoproteome.</title>
        <authorList>
            <person name="Zhou H."/>
            <person name="Di Palma S."/>
            <person name="Preisinger C."/>
            <person name="Peng M."/>
            <person name="Polat A.N."/>
            <person name="Heck A.J."/>
            <person name="Mohammed S."/>
        </authorList>
    </citation>
    <scope>PHOSPHORYLATION [LARGE SCALE ANALYSIS] AT SER-175</scope>
    <scope>IDENTIFICATION BY MASS SPECTROMETRY [LARGE SCALE ANALYSIS]</scope>
    <source>
        <tissue>Erythroleukemia</tissue>
    </source>
</reference>
<reference key="8">
    <citation type="submission" date="2008-05" db="PDB data bank">
        <title>Crystal structure of CBM20 domain of human putative glycerophosphodiester phosphodiesterase 5 (KIAA1434).</title>
        <authorList>
            <consortium name="RIKEN structural genomics initiative (RSGI)"/>
        </authorList>
    </citation>
    <scope>X-RAY CRYSTALLOGRAPHY (2.0 ANGSTROMS) OF 1-120 IN COMPLEX WITH PHOSPHATE</scope>
</reference>
<keyword id="KW-0002">3D-structure</keyword>
<keyword id="KW-0963">Cytoplasm</keyword>
<keyword id="KW-0378">Hydrolase</keyword>
<keyword id="KW-0597">Phosphoprotein</keyword>
<keyword id="KW-1267">Proteomics identification</keyword>
<keyword id="KW-1185">Reference proteome</keyword>
<sequence length="672" mass="76035">MTPSQVAFEIRGTLLPGEVFAICGSCDALGNWNPQNAVALLPENDTGESMLWKATIVLSRGVSVQYRYFKGYFLEPKTIGGPCQVIVHKWETHLQPRSITPLESEIIIDDGQFGIHNGVETLDSGWLTCQTEIRLRLHYSEKPPVSITKKKLKKSRFRVKLTLEGLEEDDDDRVSPTVLHKMSNSLEISLISDNEFKCRHSQPECGYGLQPDRWTEYSIQTMEPDNLELIFDFFEEDLSEHVVQGDALPGHVGTACLLSSTIAESGKSAGILTLPIMSRNSRKTIGKVRVDYIIIKPLPGYSCDMKSSFSKYWKPRIPLDVGHRGAGNSTTTAQLAKVQENTIASLRNAASHGAAFVEFDVHLSKDFVPVVYHDLTCCLTMKKKFDADPVELFEIPVKELTFDQLQLLKLTHVTALKSKDRKESVVQEENSFSENQPFPSLKMVLESLPEDVGFNIEIKWICQQRDGMWDGNLSTYFDMNLFLDIILKTVLENSGKRRIVFSSFDADICTMVRQKQNKYPILFLTQGKSEIYPELMDLRSRTTPIAMSFAQFENLLGINVHTEDLLRNPSYIQEAKAKGLVIFCWGDDTNDPENRRKLKELGVNGLIYDRIYDWMPEQPNIFQVEQLERLKQELPELKSCLCPTVSRFVPSSLCGESDIHVDANGIDNVENA</sequence>
<gene>
    <name type="primary">GPCPD1</name>
    <name type="synonym">GDE5</name>
    <name type="synonym">KIAA1434</name>
</gene>
<organism>
    <name type="scientific">Homo sapiens</name>
    <name type="common">Human</name>
    <dbReference type="NCBI Taxonomy" id="9606"/>
    <lineage>
        <taxon>Eukaryota</taxon>
        <taxon>Metazoa</taxon>
        <taxon>Chordata</taxon>
        <taxon>Craniata</taxon>
        <taxon>Vertebrata</taxon>
        <taxon>Euteleostomi</taxon>
        <taxon>Mammalia</taxon>
        <taxon>Eutheria</taxon>
        <taxon>Euarchontoglires</taxon>
        <taxon>Primates</taxon>
        <taxon>Haplorrhini</taxon>
        <taxon>Catarrhini</taxon>
        <taxon>Hominidae</taxon>
        <taxon>Homo</taxon>
    </lineage>
</organism>
<name>GPCP1_HUMAN</name>
<proteinExistence type="evidence at protein level"/>
<comment type="function">
    <text evidence="1">May be involved in the negative regulation of skeletal muscle differentiation, independently of its glycerophosphocholine phosphodiesterase activity.</text>
</comment>
<comment type="catalytic activity">
    <reaction>
        <text>sn-glycerol 3-phosphocholine + H2O = sn-glycerol 3-phosphate + choline + H(+)</text>
        <dbReference type="Rhea" id="RHEA:16061"/>
        <dbReference type="ChEBI" id="CHEBI:15354"/>
        <dbReference type="ChEBI" id="CHEBI:15377"/>
        <dbReference type="ChEBI" id="CHEBI:15378"/>
        <dbReference type="ChEBI" id="CHEBI:16870"/>
        <dbReference type="ChEBI" id="CHEBI:57597"/>
        <dbReference type="EC" id="3.1.4.2"/>
    </reaction>
</comment>
<comment type="interaction">
    <interactant intactId="EBI-7400460">
        <id>Q9NPB8</id>
    </interactant>
    <interactant intactId="EBI-21897396">
        <id>Q5M8T2</id>
        <label>SLC35D3</label>
    </interactant>
    <organismsDiffer>false</organismsDiffer>
    <experiments>2</experiments>
</comment>
<comment type="subcellular location">
    <subcellularLocation>
        <location evidence="1">Cytoplasm</location>
        <location evidence="1">Cytosol</location>
    </subcellularLocation>
</comment>
<comment type="tissue specificity">
    <text>Widely expressed, with highest expression in spinal chord.</text>
</comment>
<comment type="similarity">
    <text evidence="5">Belongs to the glycerophosphoryl diester phosphodiesterase family.</text>
</comment>
<comment type="sequence caution" evidence="5">
    <conflict type="erroneous initiation">
        <sequence resource="EMBL-CDS" id="BAA91994"/>
    </conflict>
    <text>Truncated N-terminus.</text>
</comment>
<comment type="sequence caution" evidence="5">
    <conflict type="erroneous initiation">
        <sequence resource="EMBL-CDS" id="BAA92672"/>
    </conflict>
    <text>Extended N-terminus.</text>
</comment>
<evidence type="ECO:0000250" key="1"/>
<evidence type="ECO:0000250" key="2">
    <source>
        <dbReference type="UniProtKB" id="Q8C0L9"/>
    </source>
</evidence>
<evidence type="ECO:0000255" key="3"/>
<evidence type="ECO:0000255" key="4">
    <source>
        <dbReference type="PROSITE-ProRule" id="PRU00594"/>
    </source>
</evidence>
<evidence type="ECO:0000305" key="5"/>
<evidence type="ECO:0007744" key="6">
    <source>
    </source>
</evidence>
<evidence type="ECO:0007829" key="7">
    <source>
        <dbReference type="PDB" id="2Z0B"/>
    </source>
</evidence>
<accession>Q9NPB8</accession>
<accession>D3DW06</accession>
<accession>Q9BQL8</accession>
<accession>Q9NUX0</accession>
<feature type="chain" id="PRO_0000050797" description="Glycerophosphocholine phosphodiesterase GPCPD1">
    <location>
        <begin position="1"/>
        <end position="672"/>
    </location>
</feature>
<feature type="domain" description="CBM20" evidence="4">
    <location>
        <begin position="1"/>
        <end position="115"/>
    </location>
</feature>
<feature type="domain" description="GP-PDE">
    <location>
        <begin position="318"/>
        <end position="618"/>
    </location>
</feature>
<feature type="binding site" evidence="3">
    <location>
        <position position="70"/>
    </location>
    <ligand>
        <name>substrate</name>
    </ligand>
</feature>
<feature type="binding site" evidence="3">
    <location>
        <begin position="88"/>
        <end position="89"/>
    </location>
    <ligand>
        <name>substrate</name>
    </ligand>
</feature>
<feature type="modified residue" description="Phosphoserine" evidence="6">
    <location>
        <position position="175"/>
    </location>
</feature>
<feature type="modified residue" description="Phosphoserine" evidence="2">
    <location>
        <position position="424"/>
    </location>
</feature>
<feature type="modified residue" description="Phosphotyrosine" evidence="2">
    <location>
        <position position="608"/>
    </location>
</feature>
<feature type="sequence variant" id="VAR_022060" description="In dbSNP:rs2273373.">
    <original>T</original>
    <variation>I</variation>
    <location>
        <position position="273"/>
    </location>
</feature>
<feature type="strand" evidence="7">
    <location>
        <begin position="4"/>
        <end position="11"/>
    </location>
</feature>
<feature type="strand" evidence="7">
    <location>
        <begin position="19"/>
        <end position="26"/>
    </location>
</feature>
<feature type="helix" evidence="7">
    <location>
        <begin position="27"/>
        <end position="29"/>
    </location>
</feature>
<feature type="turn" evidence="7">
    <location>
        <begin position="30"/>
        <end position="32"/>
    </location>
</feature>
<feature type="helix" evidence="7">
    <location>
        <begin position="34"/>
        <end position="36"/>
    </location>
</feature>
<feature type="strand" evidence="7">
    <location>
        <begin position="49"/>
        <end position="58"/>
    </location>
</feature>
<feature type="strand" evidence="7">
    <location>
        <begin position="64"/>
        <end position="74"/>
    </location>
</feature>
<feature type="strand" evidence="7">
    <location>
        <begin position="84"/>
        <end position="90"/>
    </location>
</feature>
<feature type="strand" evidence="7">
    <location>
        <begin position="97"/>
        <end position="99"/>
    </location>
</feature>
<feature type="strand" evidence="7">
    <location>
        <begin position="103"/>
        <end position="112"/>
    </location>
</feature>